<sequence length="296" mass="34486">MSEYLEYQNAIEGKTMANKKTFKQAPLPFIGQKRMFLKHVEIVLNKHIDGEGEGWTIVDVFGGSGLLSHTAKQLKPKATVIYNDFDGYAERLNHIDDINRLRQIIFNCLHGIIPKNGRLSKEIKEEIINKINDFKGYKDLNCLASWLLFSGQQVGSVEALFAKDFWNCVRQSDYPTAEGYLDGIEVISESFHKLIPRYQNQDKVLLLLDPPYLCTRQESYKQATYFDLIDFLRLINLTKPPYIFFSSTKSEFIRYLNYMQESKTDNWRAFENYKRIVVKASASKDGIYEDNMIYKF</sequence>
<gene>
    <name type="ordered locus">HI_1523</name>
</gene>
<keyword id="KW-0489">Methyltransferase</keyword>
<keyword id="KW-1185">Reference proteome</keyword>
<keyword id="KW-0808">Transferase</keyword>
<protein>
    <recommendedName>
        <fullName evidence="1">Putative methyltransferase HI_1523</fullName>
        <ecNumber evidence="1">2.1.1.-</ecNumber>
    </recommendedName>
</protein>
<name>Y1523_HAEIN</name>
<reference key="1">
    <citation type="journal article" date="1995" name="Science">
        <title>Whole-genome random sequencing and assembly of Haemophilus influenzae Rd.</title>
        <authorList>
            <person name="Fleischmann R.D."/>
            <person name="Adams M.D."/>
            <person name="White O."/>
            <person name="Clayton R.A."/>
            <person name="Kirkness E.F."/>
            <person name="Kerlavage A.R."/>
            <person name="Bult C.J."/>
            <person name="Tomb J.-F."/>
            <person name="Dougherty B.A."/>
            <person name="Merrick J.M."/>
            <person name="McKenney K."/>
            <person name="Sutton G.G."/>
            <person name="FitzHugh W."/>
            <person name="Fields C.A."/>
            <person name="Gocayne J.D."/>
            <person name="Scott J.D."/>
            <person name="Shirley R."/>
            <person name="Liu L.-I."/>
            <person name="Glodek A."/>
            <person name="Kelley J.M."/>
            <person name="Weidman J.F."/>
            <person name="Phillips C.A."/>
            <person name="Spriggs T."/>
            <person name="Hedblom E."/>
            <person name="Cotton M.D."/>
            <person name="Utterback T.R."/>
            <person name="Hanna M.C."/>
            <person name="Nguyen D.T."/>
            <person name="Saudek D.M."/>
            <person name="Brandon R.C."/>
            <person name="Fine L.D."/>
            <person name="Fritchman J.L."/>
            <person name="Fuhrmann J.L."/>
            <person name="Geoghagen N.S.M."/>
            <person name="Gnehm C.L."/>
            <person name="McDonald L.A."/>
            <person name="Small K.V."/>
            <person name="Fraser C.M."/>
            <person name="Smith H.O."/>
            <person name="Venter J.C."/>
        </authorList>
    </citation>
    <scope>NUCLEOTIDE SEQUENCE [LARGE SCALE GENOMIC DNA]</scope>
    <source>
        <strain>ATCC 51907 / DSM 11121 / KW20 / Rd</strain>
    </source>
</reference>
<accession>P44243</accession>
<proteinExistence type="inferred from homology"/>
<organism>
    <name type="scientific">Haemophilus influenzae (strain ATCC 51907 / DSM 11121 / KW20 / Rd)</name>
    <dbReference type="NCBI Taxonomy" id="71421"/>
    <lineage>
        <taxon>Bacteria</taxon>
        <taxon>Pseudomonadati</taxon>
        <taxon>Pseudomonadota</taxon>
        <taxon>Gammaproteobacteria</taxon>
        <taxon>Pasteurellales</taxon>
        <taxon>Pasteurellaceae</taxon>
        <taxon>Haemophilus</taxon>
    </lineage>
</organism>
<dbReference type="EC" id="2.1.1.-" evidence="1"/>
<dbReference type="EMBL" id="L42023">
    <property type="protein sequence ID" value="AAC23180.1"/>
    <property type="molecule type" value="Genomic_DNA"/>
</dbReference>
<dbReference type="PIR" id="A64035">
    <property type="entry name" value="A64035"/>
</dbReference>
<dbReference type="RefSeq" id="NP_439673.1">
    <property type="nucleotide sequence ID" value="NC_000907.1"/>
</dbReference>
<dbReference type="STRING" id="71421.HI_1523"/>
<dbReference type="REBASE" id="42132">
    <property type="entry name" value="M.HindVII"/>
</dbReference>
<dbReference type="EnsemblBacteria" id="AAC23180">
    <property type="protein sequence ID" value="AAC23180"/>
    <property type="gene ID" value="HI_1523"/>
</dbReference>
<dbReference type="KEGG" id="hin:HI_1523"/>
<dbReference type="PATRIC" id="fig|71421.8.peg.1594"/>
<dbReference type="eggNOG" id="COG3392">
    <property type="taxonomic scope" value="Bacteria"/>
</dbReference>
<dbReference type="HOGENOM" id="CLU_086314_0_0_6"/>
<dbReference type="OrthoDB" id="5671374at2"/>
<dbReference type="BioCyc" id="HINF71421:G1GJ1-1546-MONOMER"/>
<dbReference type="Proteomes" id="UP000000579">
    <property type="component" value="Chromosome"/>
</dbReference>
<dbReference type="GO" id="GO:0008168">
    <property type="term" value="F:methyltransferase activity"/>
    <property type="evidence" value="ECO:0007669"/>
    <property type="project" value="UniProtKB-KW"/>
</dbReference>
<dbReference type="GO" id="GO:0032259">
    <property type="term" value="P:methylation"/>
    <property type="evidence" value="ECO:0007669"/>
    <property type="project" value="UniProtKB-KW"/>
</dbReference>
<dbReference type="InterPro" id="IPR029063">
    <property type="entry name" value="SAM-dependent_MTases_sf"/>
</dbReference>
<dbReference type="SUPFAM" id="SSF53335">
    <property type="entry name" value="S-adenosyl-L-methionine-dependent methyltransferases"/>
    <property type="match status" value="1"/>
</dbReference>
<dbReference type="PROSITE" id="PS00092">
    <property type="entry name" value="N6_MTASE"/>
    <property type="match status" value="1"/>
</dbReference>
<feature type="chain" id="PRO_0000078081" description="Putative methyltransferase HI_1523">
    <location>
        <begin position="1"/>
        <end position="296"/>
    </location>
</feature>
<evidence type="ECO:0000305" key="1"/>
<comment type="similarity">
    <text evidence="1">Belongs to the N(4)/N(6)-methyltransferase family.</text>
</comment>